<proteinExistence type="inferred from homology"/>
<gene>
    <name evidence="1" type="primary">recA</name>
    <name type="ordered locus">SMU_2085</name>
</gene>
<feature type="chain" id="PRO_0000122857" description="Protein RecA">
    <location>
        <begin position="1"/>
        <end position="383"/>
    </location>
</feature>
<feature type="region of interest" description="Disordered" evidence="2">
    <location>
        <begin position="347"/>
        <end position="369"/>
    </location>
</feature>
<feature type="compositionally biased region" description="Basic and acidic residues" evidence="2">
    <location>
        <begin position="353"/>
        <end position="369"/>
    </location>
</feature>
<feature type="binding site" evidence="1">
    <location>
        <begin position="79"/>
        <end position="86"/>
    </location>
    <ligand>
        <name>ATP</name>
        <dbReference type="ChEBI" id="CHEBI:30616"/>
    </ligand>
</feature>
<feature type="sequence conflict" description="In Ref. 2." evidence="3" ref="2">
    <original>V</original>
    <variation>A</variation>
    <location>
        <position position="93"/>
    </location>
</feature>
<feature type="sequence conflict" description="In Ref. 2." evidence="3" ref="2">
    <original>D</original>
    <variation>N</variation>
    <location>
        <position position="174"/>
    </location>
</feature>
<comment type="function">
    <text>Can catalyze the hydrolysis of ATP in the presence of single-stranded DNA, the ATP-dependent uptake of single-stranded DNA by duplex DNA, and the ATP-dependent hybridization of homologous single-stranded DNAs. It interacts with LexA causing its activation and leading to its autocatalytic cleavage.</text>
</comment>
<comment type="subcellular location">
    <subcellularLocation>
        <location evidence="1">Cytoplasm</location>
    </subcellularLocation>
</comment>
<comment type="similarity">
    <text evidence="1">Belongs to the RecA family.</text>
</comment>
<keyword id="KW-0067">ATP-binding</keyword>
<keyword id="KW-0963">Cytoplasm</keyword>
<keyword id="KW-0227">DNA damage</keyword>
<keyword id="KW-0233">DNA recombination</keyword>
<keyword id="KW-0234">DNA repair</keyword>
<keyword id="KW-0238">DNA-binding</keyword>
<keyword id="KW-0547">Nucleotide-binding</keyword>
<keyword id="KW-1185">Reference proteome</keyword>
<keyword id="KW-0742">SOS response</keyword>
<reference key="1">
    <citation type="journal article" date="2002" name="Proc. Natl. Acad. Sci. U.S.A.">
        <title>Genome sequence of Streptococcus mutans UA159, a cariogenic dental pathogen.</title>
        <authorList>
            <person name="Ajdic D.J."/>
            <person name="McShan W.M."/>
            <person name="McLaughlin R.E."/>
            <person name="Savic G."/>
            <person name="Chang J."/>
            <person name="Carson M.B."/>
            <person name="Primeaux C."/>
            <person name="Tian R."/>
            <person name="Kenton S."/>
            <person name="Jia H.G."/>
            <person name="Lin S.P."/>
            <person name="Qian Y."/>
            <person name="Li S."/>
            <person name="Zhu H."/>
            <person name="Najar F.Z."/>
            <person name="Lai H."/>
            <person name="White J."/>
            <person name="Roe B.A."/>
            <person name="Ferretti J.J."/>
        </authorList>
    </citation>
    <scope>NUCLEOTIDE SEQUENCE [LARGE SCALE GENOMIC DNA]</scope>
    <source>
        <strain>ATCC 700610 / UA159</strain>
    </source>
</reference>
<reference key="2">
    <citation type="journal article" date="1992" name="Gene">
        <title>In vivo inactivation of the Streptococcus mutans recA gene mediated by PCR amplification and cloning of a recA DNA fragment.</title>
        <authorList>
            <person name="Quivey R.G. Jr."/>
            <person name="Faustoferri R.C."/>
        </authorList>
    </citation>
    <scope>NUCLEOTIDE SEQUENCE [GENOMIC DNA] OF 79-308</scope>
</reference>
<reference key="3">
    <citation type="journal article" date="1992" name="J. Bacteriol.">
        <title>Degenerate oligonucleotide primers for enzymatic amplification of recA sequences from Gram-positive bacteria and mycoplasmas.</title>
        <authorList>
            <person name="Dybvig K."/>
            <person name="Hollingshead S.K."/>
            <person name="Heath D.G."/>
            <person name="Clewell D.B."/>
            <person name="Sun F."/>
            <person name="Woodard A."/>
        </authorList>
    </citation>
    <scope>NUCLEOTIDE SEQUENCE [GENOMIC DNA] OF 105-206</scope>
</reference>
<organism>
    <name type="scientific">Streptococcus mutans serotype c (strain ATCC 700610 / UA159)</name>
    <dbReference type="NCBI Taxonomy" id="210007"/>
    <lineage>
        <taxon>Bacteria</taxon>
        <taxon>Bacillati</taxon>
        <taxon>Bacillota</taxon>
        <taxon>Bacilli</taxon>
        <taxon>Lactobacillales</taxon>
        <taxon>Streptococcaceae</taxon>
        <taxon>Streptococcus</taxon>
    </lineage>
</organism>
<accession>P27624</accession>
<accession>Q54467</accession>
<sequence>MAKRIKKTEEITKKFGDERKKALDDALKNIEKDFGKGAVMRLGERAEQKVQVMSSGSLALDIALGAGGYPKGRIVEIYGPESSGKTTVALHAVAQAQKDGGIAAFIDAEHALDPAYAAALGVNIDELLLSQPDSGEQGLEIAGKLIDSGAVDLVVVDSVAALVPRAEIDGDIGDSHVGLQARMMSQAMRKLSASINKTKTIAIFINQLREKVGIMFGNPETTPGGRALKFYSSVRLDVRGNTQIKGTGEQKDSNIGKETKIKVVKNKVAPPFKEAFVEIIYGEGISRTGELVKIASDLGIIQKAGAWYSYNGEKIGQGSENAKKFLADNPEIFDDIDHKVRVQYGLIEEDNTEEKQSSKEKETDEKADKNLVLELDDTIELED</sequence>
<dbReference type="EMBL" id="AE014133">
    <property type="protein sequence ID" value="AAN59680.1"/>
    <property type="molecule type" value="Genomic_DNA"/>
</dbReference>
<dbReference type="EMBL" id="M61897">
    <property type="status" value="NOT_ANNOTATED_CDS"/>
    <property type="molecule type" value="Genomic_DNA"/>
</dbReference>
<dbReference type="EMBL" id="M81468">
    <property type="protein sequence ID" value="AAA26929.1"/>
    <property type="status" value="ALT_SEQ"/>
    <property type="molecule type" value="Genomic_DNA"/>
</dbReference>
<dbReference type="RefSeq" id="NP_722374.1">
    <property type="nucleotide sequence ID" value="NC_004350.2"/>
</dbReference>
<dbReference type="RefSeq" id="WP_002262392.1">
    <property type="nucleotide sequence ID" value="NC_004350.2"/>
</dbReference>
<dbReference type="SMR" id="P27624"/>
<dbReference type="STRING" id="210007.SMU_2085"/>
<dbReference type="GeneID" id="93860300"/>
<dbReference type="KEGG" id="smu:SMU_2085"/>
<dbReference type="PATRIC" id="fig|210007.7.peg.1855"/>
<dbReference type="eggNOG" id="COG0468">
    <property type="taxonomic scope" value="Bacteria"/>
</dbReference>
<dbReference type="HOGENOM" id="CLU_040469_3_2_9"/>
<dbReference type="OrthoDB" id="9776733at2"/>
<dbReference type="PhylomeDB" id="P27624"/>
<dbReference type="Proteomes" id="UP000002512">
    <property type="component" value="Chromosome"/>
</dbReference>
<dbReference type="GO" id="GO:0005829">
    <property type="term" value="C:cytosol"/>
    <property type="evidence" value="ECO:0007669"/>
    <property type="project" value="TreeGrafter"/>
</dbReference>
<dbReference type="GO" id="GO:0005524">
    <property type="term" value="F:ATP binding"/>
    <property type="evidence" value="ECO:0007669"/>
    <property type="project" value="UniProtKB-UniRule"/>
</dbReference>
<dbReference type="GO" id="GO:0016887">
    <property type="term" value="F:ATP hydrolysis activity"/>
    <property type="evidence" value="ECO:0007669"/>
    <property type="project" value="InterPro"/>
</dbReference>
<dbReference type="GO" id="GO:0140664">
    <property type="term" value="F:ATP-dependent DNA damage sensor activity"/>
    <property type="evidence" value="ECO:0007669"/>
    <property type="project" value="InterPro"/>
</dbReference>
<dbReference type="GO" id="GO:0003684">
    <property type="term" value="F:damaged DNA binding"/>
    <property type="evidence" value="ECO:0007669"/>
    <property type="project" value="UniProtKB-UniRule"/>
</dbReference>
<dbReference type="GO" id="GO:0003697">
    <property type="term" value="F:single-stranded DNA binding"/>
    <property type="evidence" value="ECO:0007669"/>
    <property type="project" value="UniProtKB-UniRule"/>
</dbReference>
<dbReference type="GO" id="GO:0006310">
    <property type="term" value="P:DNA recombination"/>
    <property type="evidence" value="ECO:0007669"/>
    <property type="project" value="UniProtKB-UniRule"/>
</dbReference>
<dbReference type="GO" id="GO:0006281">
    <property type="term" value="P:DNA repair"/>
    <property type="evidence" value="ECO:0007669"/>
    <property type="project" value="UniProtKB-UniRule"/>
</dbReference>
<dbReference type="GO" id="GO:0009432">
    <property type="term" value="P:SOS response"/>
    <property type="evidence" value="ECO:0007669"/>
    <property type="project" value="UniProtKB-UniRule"/>
</dbReference>
<dbReference type="CDD" id="cd00983">
    <property type="entry name" value="RecA"/>
    <property type="match status" value="1"/>
</dbReference>
<dbReference type="FunFam" id="3.40.50.300:FF:000087">
    <property type="entry name" value="Recombinase RecA"/>
    <property type="match status" value="1"/>
</dbReference>
<dbReference type="Gene3D" id="3.40.50.300">
    <property type="entry name" value="P-loop containing nucleotide triphosphate hydrolases"/>
    <property type="match status" value="1"/>
</dbReference>
<dbReference type="HAMAP" id="MF_00268">
    <property type="entry name" value="RecA"/>
    <property type="match status" value="1"/>
</dbReference>
<dbReference type="InterPro" id="IPR003593">
    <property type="entry name" value="AAA+_ATPase"/>
</dbReference>
<dbReference type="InterPro" id="IPR013765">
    <property type="entry name" value="DNA_recomb/repair_RecA"/>
</dbReference>
<dbReference type="InterPro" id="IPR020584">
    <property type="entry name" value="DNA_recomb/repair_RecA_CS"/>
</dbReference>
<dbReference type="InterPro" id="IPR027417">
    <property type="entry name" value="P-loop_NTPase"/>
</dbReference>
<dbReference type="InterPro" id="IPR049261">
    <property type="entry name" value="RecA-like_C"/>
</dbReference>
<dbReference type="InterPro" id="IPR049428">
    <property type="entry name" value="RecA-like_N"/>
</dbReference>
<dbReference type="InterPro" id="IPR020588">
    <property type="entry name" value="RecA_ATP-bd"/>
</dbReference>
<dbReference type="InterPro" id="IPR023400">
    <property type="entry name" value="RecA_C_sf"/>
</dbReference>
<dbReference type="InterPro" id="IPR020587">
    <property type="entry name" value="RecA_monomer-monomer_interface"/>
</dbReference>
<dbReference type="NCBIfam" id="TIGR02012">
    <property type="entry name" value="tigrfam_recA"/>
    <property type="match status" value="1"/>
</dbReference>
<dbReference type="PANTHER" id="PTHR45900:SF1">
    <property type="entry name" value="MITOCHONDRIAL DNA REPAIR PROTEIN RECA HOMOLOG-RELATED"/>
    <property type="match status" value="1"/>
</dbReference>
<dbReference type="PANTHER" id="PTHR45900">
    <property type="entry name" value="RECA"/>
    <property type="match status" value="1"/>
</dbReference>
<dbReference type="Pfam" id="PF00154">
    <property type="entry name" value="RecA"/>
    <property type="match status" value="1"/>
</dbReference>
<dbReference type="Pfam" id="PF21096">
    <property type="entry name" value="RecA_C"/>
    <property type="match status" value="1"/>
</dbReference>
<dbReference type="PRINTS" id="PR00142">
    <property type="entry name" value="RECA"/>
</dbReference>
<dbReference type="SMART" id="SM00382">
    <property type="entry name" value="AAA"/>
    <property type="match status" value="1"/>
</dbReference>
<dbReference type="SUPFAM" id="SSF52540">
    <property type="entry name" value="P-loop containing nucleoside triphosphate hydrolases"/>
    <property type="match status" value="1"/>
</dbReference>
<dbReference type="SUPFAM" id="SSF54752">
    <property type="entry name" value="RecA protein, C-terminal domain"/>
    <property type="match status" value="1"/>
</dbReference>
<dbReference type="PROSITE" id="PS00321">
    <property type="entry name" value="RECA_1"/>
    <property type="match status" value="1"/>
</dbReference>
<dbReference type="PROSITE" id="PS50162">
    <property type="entry name" value="RECA_2"/>
    <property type="match status" value="1"/>
</dbReference>
<dbReference type="PROSITE" id="PS50163">
    <property type="entry name" value="RECA_3"/>
    <property type="match status" value="1"/>
</dbReference>
<evidence type="ECO:0000255" key="1">
    <source>
        <dbReference type="HAMAP-Rule" id="MF_00268"/>
    </source>
</evidence>
<evidence type="ECO:0000256" key="2">
    <source>
        <dbReference type="SAM" id="MobiDB-lite"/>
    </source>
</evidence>
<evidence type="ECO:0000305" key="3"/>
<name>RECA_STRMU</name>
<protein>
    <recommendedName>
        <fullName evidence="1">Protein RecA</fullName>
    </recommendedName>
    <alternativeName>
        <fullName evidence="1">Recombinase A</fullName>
    </alternativeName>
</protein>